<gene>
    <name type="primary">RBM45</name>
    <name evidence="9" type="synonym">DRB1</name>
    <name type="synonym">DRBP1</name>
</gene>
<organism>
    <name type="scientific">Homo sapiens</name>
    <name type="common">Human</name>
    <dbReference type="NCBI Taxonomy" id="9606"/>
    <lineage>
        <taxon>Eukaryota</taxon>
        <taxon>Metazoa</taxon>
        <taxon>Chordata</taxon>
        <taxon>Craniata</taxon>
        <taxon>Vertebrata</taxon>
        <taxon>Euteleostomi</taxon>
        <taxon>Mammalia</taxon>
        <taxon>Eutheria</taxon>
        <taxon>Euarchontoglires</taxon>
        <taxon>Primates</taxon>
        <taxon>Haplorrhini</taxon>
        <taxon>Catarrhini</taxon>
        <taxon>Hominidae</taxon>
        <taxon>Homo</taxon>
    </lineage>
</organism>
<dbReference type="EMBL" id="AB036991">
    <property type="protein sequence ID" value="BAC16207.1"/>
    <property type="molecule type" value="mRNA"/>
</dbReference>
<dbReference type="EMBL" id="AF526533">
    <property type="protein sequence ID" value="AAM88417.1"/>
    <property type="molecule type" value="mRNA"/>
</dbReference>
<dbReference type="EMBL" id="BC066549">
    <property type="protein sequence ID" value="AAH66549.1"/>
    <property type="molecule type" value="mRNA"/>
</dbReference>
<dbReference type="CCDS" id="CCDS33335.1">
    <molecule id="Q8IUH3-3"/>
</dbReference>
<dbReference type="CCDS" id="CCDS92906.1">
    <molecule id="Q8IUH3-1"/>
</dbReference>
<dbReference type="RefSeq" id="NP_001352507.1">
    <molecule id="Q8IUH3-3"/>
    <property type="nucleotide sequence ID" value="NM_001365578.1"/>
</dbReference>
<dbReference type="RefSeq" id="NP_001352508.1">
    <molecule id="Q8IUH3-1"/>
    <property type="nucleotide sequence ID" value="NM_001365579.1"/>
</dbReference>
<dbReference type="RefSeq" id="NP_694453.2">
    <molecule id="Q8IUH3-3"/>
    <property type="nucleotide sequence ID" value="NM_152945.4"/>
</dbReference>
<dbReference type="RefSeq" id="XP_005246344.1">
    <property type="nucleotide sequence ID" value="XM_005246287.4"/>
</dbReference>
<dbReference type="RefSeq" id="XP_016858811.1">
    <property type="nucleotide sequence ID" value="XM_017003322.1"/>
</dbReference>
<dbReference type="RefSeq" id="XP_047299279.1">
    <molecule id="Q8IUH3-3"/>
    <property type="nucleotide sequence ID" value="XM_047443323.1"/>
</dbReference>
<dbReference type="RefSeq" id="XP_047299280.1">
    <molecule id="Q8IUH3-3"/>
    <property type="nucleotide sequence ID" value="XM_047443324.1"/>
</dbReference>
<dbReference type="PDB" id="7CSX">
    <property type="method" value="X-ray"/>
    <property type="resolution" value="2.50 A"/>
    <property type="chains" value="A=23-202"/>
</dbReference>
<dbReference type="PDB" id="7CSZ">
    <property type="method" value="X-ray"/>
    <property type="resolution" value="1.80 A"/>
    <property type="chains" value="A=23-202"/>
</dbReference>
<dbReference type="PDB" id="8WQ3">
    <property type="method" value="X-ray"/>
    <property type="resolution" value="2.41 A"/>
    <property type="chains" value="A/B/C/D=370-476"/>
</dbReference>
<dbReference type="PDB" id="8WQ5">
    <property type="method" value="X-ray"/>
    <property type="resolution" value="1.65 A"/>
    <property type="chains" value="A/B/C/D=370-476"/>
</dbReference>
<dbReference type="PDBsum" id="7CSX"/>
<dbReference type="PDBsum" id="7CSZ"/>
<dbReference type="PDBsum" id="8WQ3"/>
<dbReference type="PDBsum" id="8WQ5"/>
<dbReference type="SMR" id="Q8IUH3"/>
<dbReference type="BioGRID" id="126210">
    <property type="interactions" value="216"/>
</dbReference>
<dbReference type="FunCoup" id="Q8IUH3">
    <property type="interactions" value="3366"/>
</dbReference>
<dbReference type="IntAct" id="Q8IUH3">
    <property type="interactions" value="207"/>
</dbReference>
<dbReference type="MINT" id="Q8IUH3"/>
<dbReference type="STRING" id="9606.ENSP00000286070"/>
<dbReference type="GlyGen" id="Q8IUH3">
    <property type="glycosylation" value="1 site, 1 O-linked glycan (1 site)"/>
</dbReference>
<dbReference type="iPTMnet" id="Q8IUH3"/>
<dbReference type="PhosphoSitePlus" id="Q8IUH3"/>
<dbReference type="BioMuta" id="RBM45"/>
<dbReference type="DMDM" id="59797947"/>
<dbReference type="jPOST" id="Q8IUH3"/>
<dbReference type="MassIVE" id="Q8IUH3"/>
<dbReference type="PaxDb" id="9606-ENSP00000286070"/>
<dbReference type="PeptideAtlas" id="Q8IUH3"/>
<dbReference type="ProteomicsDB" id="70566">
    <molecule id="Q8IUH3-1"/>
</dbReference>
<dbReference type="ProteomicsDB" id="70567">
    <molecule id="Q8IUH3-2"/>
</dbReference>
<dbReference type="ProteomicsDB" id="70568">
    <molecule id="Q8IUH3-3"/>
</dbReference>
<dbReference type="Pumba" id="Q8IUH3"/>
<dbReference type="Antibodypedia" id="19584">
    <property type="antibodies" value="134 antibodies from 23 providers"/>
</dbReference>
<dbReference type="DNASU" id="129831"/>
<dbReference type="Ensembl" id="ENST00000286070.10">
    <molecule id="Q8IUH3-3"/>
    <property type="protein sequence ID" value="ENSP00000286070.5"/>
    <property type="gene ID" value="ENSG00000155636.16"/>
</dbReference>
<dbReference type="GeneID" id="129831"/>
<dbReference type="KEGG" id="hsa:129831"/>
<dbReference type="MANE-Select" id="ENST00000286070.10">
    <molecule id="Q8IUH3-3"/>
    <property type="protein sequence ID" value="ENSP00000286070.5"/>
    <property type="RefSeq nucleotide sequence ID" value="NM_152945.4"/>
    <property type="RefSeq protein sequence ID" value="NP_694453.2"/>
</dbReference>
<dbReference type="UCSC" id="uc002ulv.4">
    <molecule id="Q8IUH3-1"/>
    <property type="organism name" value="human"/>
</dbReference>
<dbReference type="AGR" id="HGNC:24468"/>
<dbReference type="CTD" id="129831"/>
<dbReference type="DisGeNET" id="129831"/>
<dbReference type="GeneCards" id="RBM45"/>
<dbReference type="HGNC" id="HGNC:24468">
    <property type="gene designation" value="RBM45"/>
</dbReference>
<dbReference type="HPA" id="ENSG00000155636">
    <property type="expression patterns" value="Low tissue specificity"/>
</dbReference>
<dbReference type="MIM" id="608888">
    <property type="type" value="gene"/>
</dbReference>
<dbReference type="neXtProt" id="NX_Q8IUH3"/>
<dbReference type="OpenTargets" id="ENSG00000155636"/>
<dbReference type="PharmGKB" id="PA162400809"/>
<dbReference type="VEuPathDB" id="HostDB:ENSG00000155636"/>
<dbReference type="eggNOG" id="ENOG502QTJ8">
    <property type="taxonomic scope" value="Eukaryota"/>
</dbReference>
<dbReference type="GeneTree" id="ENSGT00680000100059"/>
<dbReference type="HOGENOM" id="CLU_035274_1_0_1"/>
<dbReference type="InParanoid" id="Q8IUH3"/>
<dbReference type="OMA" id="MIPKTYT"/>
<dbReference type="OrthoDB" id="78437at2759"/>
<dbReference type="PAN-GO" id="Q8IUH3">
    <property type="GO annotations" value="2 GO annotations based on evolutionary models"/>
</dbReference>
<dbReference type="PhylomeDB" id="Q8IUH3"/>
<dbReference type="TreeFam" id="TF324216"/>
<dbReference type="PathwayCommons" id="Q8IUH3"/>
<dbReference type="SignaLink" id="Q8IUH3"/>
<dbReference type="BioGRID-ORCS" id="129831">
    <property type="hits" value="14 hits in 1080 CRISPR screens"/>
</dbReference>
<dbReference type="CD-CODE" id="A0DCDA94">
    <property type="entry name" value="DNA damage foci"/>
</dbReference>
<dbReference type="CD-CODE" id="B5B9A610">
    <property type="entry name" value="PML body"/>
</dbReference>
<dbReference type="CD-CODE" id="DEE660B4">
    <property type="entry name" value="Stress granule"/>
</dbReference>
<dbReference type="ChiTaRS" id="RBM45">
    <property type="organism name" value="human"/>
</dbReference>
<dbReference type="GenomeRNAi" id="129831"/>
<dbReference type="Pharos" id="Q8IUH3">
    <property type="development level" value="Tbio"/>
</dbReference>
<dbReference type="PRO" id="PR:Q8IUH3"/>
<dbReference type="Proteomes" id="UP000005640">
    <property type="component" value="Chromosome 2"/>
</dbReference>
<dbReference type="RNAct" id="Q8IUH3">
    <property type="molecule type" value="protein"/>
</dbReference>
<dbReference type="Bgee" id="ENSG00000155636">
    <property type="expression patterns" value="Expressed in mucosa of transverse colon and 164 other cell types or tissues"/>
</dbReference>
<dbReference type="ExpressionAtlas" id="Q8IUH3">
    <property type="expression patterns" value="baseline and differential"/>
</dbReference>
<dbReference type="GO" id="GO:0005737">
    <property type="term" value="C:cytoplasm"/>
    <property type="evidence" value="ECO:0000314"/>
    <property type="project" value="UniProtKB"/>
</dbReference>
<dbReference type="GO" id="GO:0005654">
    <property type="term" value="C:nucleoplasm"/>
    <property type="evidence" value="ECO:0000314"/>
    <property type="project" value="HPA"/>
</dbReference>
<dbReference type="GO" id="GO:0005634">
    <property type="term" value="C:nucleus"/>
    <property type="evidence" value="ECO:0000314"/>
    <property type="project" value="UniProtKB"/>
</dbReference>
<dbReference type="GO" id="GO:1990904">
    <property type="term" value="C:ribonucleoprotein complex"/>
    <property type="evidence" value="ECO:0000318"/>
    <property type="project" value="GO_Central"/>
</dbReference>
<dbReference type="GO" id="GO:0042802">
    <property type="term" value="F:identical protein binding"/>
    <property type="evidence" value="ECO:0000353"/>
    <property type="project" value="IntAct"/>
</dbReference>
<dbReference type="GO" id="GO:0003723">
    <property type="term" value="F:RNA binding"/>
    <property type="evidence" value="ECO:0000314"/>
    <property type="project" value="UniProtKB"/>
</dbReference>
<dbReference type="GO" id="GO:0030154">
    <property type="term" value="P:cell differentiation"/>
    <property type="evidence" value="ECO:0007669"/>
    <property type="project" value="UniProtKB-KW"/>
</dbReference>
<dbReference type="GO" id="GO:0007399">
    <property type="term" value="P:nervous system development"/>
    <property type="evidence" value="ECO:0000250"/>
    <property type="project" value="UniProtKB"/>
</dbReference>
<dbReference type="CDD" id="cd12366">
    <property type="entry name" value="RRM1_RBM45"/>
    <property type="match status" value="1"/>
</dbReference>
<dbReference type="CDD" id="cd12367">
    <property type="entry name" value="RRM2_RBM45"/>
    <property type="match status" value="1"/>
</dbReference>
<dbReference type="CDD" id="cd12368">
    <property type="entry name" value="RRM3_RBM45"/>
    <property type="match status" value="1"/>
</dbReference>
<dbReference type="CDD" id="cd12369">
    <property type="entry name" value="RRM4_RBM45"/>
    <property type="match status" value="1"/>
</dbReference>
<dbReference type="FunFam" id="3.30.70.330:FF:000292">
    <property type="entry name" value="RNA-binding motif protein 45"/>
    <property type="match status" value="1"/>
</dbReference>
<dbReference type="FunFam" id="3.30.70.330:FF:000295">
    <property type="entry name" value="RNA-binding motif protein 45"/>
    <property type="match status" value="1"/>
</dbReference>
<dbReference type="FunFam" id="3.30.70.330:FF:000290">
    <property type="entry name" value="RNA-binding protein 45 isoform X1"/>
    <property type="match status" value="1"/>
</dbReference>
<dbReference type="Gene3D" id="3.30.70.330">
    <property type="match status" value="3"/>
</dbReference>
<dbReference type="InterPro" id="IPR012677">
    <property type="entry name" value="Nucleotide-bd_a/b_plait_sf"/>
</dbReference>
<dbReference type="InterPro" id="IPR035979">
    <property type="entry name" value="RBD_domain_sf"/>
</dbReference>
<dbReference type="InterPro" id="IPR034203">
    <property type="entry name" value="RBM45_RRM1"/>
</dbReference>
<dbReference type="InterPro" id="IPR034206">
    <property type="entry name" value="RBM45_RRM2"/>
</dbReference>
<dbReference type="InterPro" id="IPR034207">
    <property type="entry name" value="RBM45_RRM3"/>
</dbReference>
<dbReference type="InterPro" id="IPR034208">
    <property type="entry name" value="RBM45_RRM4"/>
</dbReference>
<dbReference type="InterPro" id="IPR000504">
    <property type="entry name" value="RRM_dom"/>
</dbReference>
<dbReference type="InterPro" id="IPR052462">
    <property type="entry name" value="SLIRP/GR-RBP-like"/>
</dbReference>
<dbReference type="PANTHER" id="PTHR48027">
    <property type="entry name" value="HETEROGENEOUS NUCLEAR RIBONUCLEOPROTEIN 87F-RELATED"/>
    <property type="match status" value="1"/>
</dbReference>
<dbReference type="Pfam" id="PF00076">
    <property type="entry name" value="RRM_1"/>
    <property type="match status" value="4"/>
</dbReference>
<dbReference type="SMART" id="SM00360">
    <property type="entry name" value="RRM"/>
    <property type="match status" value="4"/>
</dbReference>
<dbReference type="SUPFAM" id="SSF54928">
    <property type="entry name" value="RNA-binding domain, RBD"/>
    <property type="match status" value="2"/>
</dbReference>
<dbReference type="PROSITE" id="PS50102">
    <property type="entry name" value="RRM"/>
    <property type="match status" value="3"/>
</dbReference>
<feature type="chain" id="PRO_0000081572" description="RNA-binding protein 45">
    <location>
        <begin position="1"/>
        <end position="476"/>
    </location>
</feature>
<feature type="domain" description="RRM 1" evidence="3">
    <location>
        <begin position="26"/>
        <end position="106"/>
    </location>
</feature>
<feature type="domain" description="RRM 2" evidence="3">
    <location>
        <begin position="121"/>
        <end position="195"/>
    </location>
</feature>
<feature type="domain" description="RRM 3" evidence="3">
    <location>
        <begin position="392"/>
        <end position="464"/>
    </location>
</feature>
<feature type="region of interest" description="Disordered" evidence="4">
    <location>
        <begin position="1"/>
        <end position="20"/>
    </location>
</feature>
<feature type="modified residue" description="Phosphoserine" evidence="1">
    <location>
        <position position="199"/>
    </location>
</feature>
<feature type="modified residue" description="Phosphoserine" evidence="12">
    <location>
        <position position="464"/>
    </location>
</feature>
<feature type="cross-link" description="Glycyl lysine isopeptide (Lys-Gly) (interchain with G-Cter in SUMO2)" evidence="13">
    <location>
        <position position="34"/>
    </location>
</feature>
<feature type="splice variant" id="VSP_021005" description="In isoform 2 and isoform 3." evidence="6 7">
    <location>
        <begin position="225"/>
        <end position="226"/>
    </location>
</feature>
<feature type="splice variant" id="VSP_051661" description="In isoform 2." evidence="7">
    <original>D</original>
    <variation>E</variation>
    <location>
        <position position="330"/>
    </location>
</feature>
<feature type="splice variant" id="VSP_051662" description="In isoform 2." evidence="7">
    <location>
        <begin position="331"/>
        <end position="476"/>
    </location>
</feature>
<feature type="strand" evidence="15">
    <location>
        <begin position="27"/>
        <end position="31"/>
    </location>
</feature>
<feature type="helix" evidence="15">
    <location>
        <begin position="38"/>
        <end position="45"/>
    </location>
</feature>
<feature type="helix" evidence="15">
    <location>
        <begin position="46"/>
        <end position="48"/>
    </location>
</feature>
<feature type="strand" evidence="15">
    <location>
        <begin position="51"/>
        <end position="58"/>
    </location>
</feature>
<feature type="turn" evidence="15">
    <location>
        <begin position="60"/>
        <end position="62"/>
    </location>
</feature>
<feature type="strand" evidence="15">
    <location>
        <begin position="65"/>
        <end position="75"/>
    </location>
</feature>
<feature type="helix" evidence="15">
    <location>
        <begin position="76"/>
        <end position="86"/>
    </location>
</feature>
<feature type="helix" evidence="14">
    <location>
        <begin position="93"/>
        <end position="95"/>
    </location>
</feature>
<feature type="strand" evidence="15">
    <location>
        <begin position="100"/>
        <end position="103"/>
    </location>
</feature>
<feature type="strand" evidence="15">
    <location>
        <begin position="107"/>
        <end position="109"/>
    </location>
</feature>
<feature type="helix" evidence="15">
    <location>
        <begin position="117"/>
        <end position="119"/>
    </location>
</feature>
<feature type="strand" evidence="15">
    <location>
        <begin position="121"/>
        <end position="126"/>
    </location>
</feature>
<feature type="helix" evidence="15">
    <location>
        <begin position="133"/>
        <end position="140"/>
    </location>
</feature>
<feature type="helix" evidence="15">
    <location>
        <begin position="141"/>
        <end position="143"/>
    </location>
</feature>
<feature type="strand" evidence="15">
    <location>
        <begin position="146"/>
        <end position="153"/>
    </location>
</feature>
<feature type="turn" evidence="15">
    <location>
        <begin position="155"/>
        <end position="157"/>
    </location>
</feature>
<feature type="strand" evidence="15">
    <location>
        <begin position="160"/>
        <end position="170"/>
    </location>
</feature>
<feature type="helix" evidence="15">
    <location>
        <begin position="171"/>
        <end position="180"/>
    </location>
</feature>
<feature type="helix" evidence="15">
    <location>
        <begin position="183"/>
        <end position="185"/>
    </location>
</feature>
<feature type="strand" evidence="16">
    <location>
        <begin position="373"/>
        <end position="375"/>
    </location>
</feature>
<feature type="strand" evidence="17">
    <location>
        <begin position="391"/>
        <end position="401"/>
    </location>
</feature>
<feature type="helix" evidence="17">
    <location>
        <begin position="405"/>
        <end position="413"/>
    </location>
</feature>
<feature type="strand" evidence="17">
    <location>
        <begin position="418"/>
        <end position="423"/>
    </location>
</feature>
<feature type="strand" evidence="17">
    <location>
        <begin position="427"/>
        <end position="435"/>
    </location>
</feature>
<feature type="helix" evidence="17">
    <location>
        <begin position="437"/>
        <end position="447"/>
    </location>
</feature>
<feature type="strand" evidence="17">
    <location>
        <begin position="455"/>
        <end position="461"/>
    </location>
</feature>
<sequence length="476" mass="53502">MDEAGSSASGGGFRPGVDSLDEPPNSRIFLVISKYTPESVLRERFSPFGDIQDIWVVRDKHTKESKGIAFVKFARSSQACRAMEEMHGQCLGPNDTKPIKVFIAQSRSSGSHRDVEDEELTRIFVMIPKSYTEEDLREKFKVYGDIEYCSIIKNKVTGESKGLGYVRYLKPSQAAQAIENCDRSFRAILAEPKNKASESSEQDYYSNMRQEALGHEPRVNMFPFVGEQQSEFSSFDKNDSRGQEAISKRLSVVSRVPFTEEQLFSIFDIVPGLEYCEVQRDPYSNYGHGVVQYFNVASAIYAKYKLHGFQYPPGNRIGVSFIDDGSNATDLLRKMATQMVAAQLASMVWNNPSQQQFMQFGGSSGSQLPQIQTDVVLPSCKKKAPAETPVKERLFIVFNPHPLPLDVLEDIFCRFGNLIEVYLVSGKNVGYAKYADRISANDAIATLHGKILNGVRLKVMLADSPREESNKRQRTY</sequence>
<proteinExistence type="evidence at protein level"/>
<comment type="function">
    <text evidence="2 5">RNA-binding protein with binding specificity for poly(C). May play an important role in neural development.</text>
</comment>
<comment type="interaction">
    <interactant intactId="EBI-2512147">
        <id>Q8IUH3</id>
    </interactant>
    <interactant intactId="EBI-2339898">
        <id>Q9NW38</id>
        <label>FANCL</label>
    </interactant>
    <organismsDiffer>false</organismsDiffer>
    <experiments>3</experiments>
</comment>
<comment type="interaction">
    <interactant intactId="EBI-2512147">
        <id>Q8IUH3</id>
    </interactant>
    <interactant intactId="EBI-352662">
        <id>P09651</id>
        <label>HNRNPA1</label>
    </interactant>
    <organismsDiffer>false</organismsDiffer>
    <experiments>6</experiments>
</comment>
<comment type="interaction">
    <interactant intactId="EBI-2512147">
        <id>Q8IUH3</id>
    </interactant>
    <interactant intactId="EBI-719024">
        <id>P14866</id>
        <label>HNRNPL</label>
    </interactant>
    <organismsDiffer>false</organismsDiffer>
    <experiments>5</experiments>
</comment>
<comment type="interaction">
    <interactant intactId="EBI-2512147">
        <id>Q8IUH3</id>
    </interactant>
    <interactant intactId="EBI-352602">
        <id>P43243</id>
        <label>MATR3</label>
    </interactant>
    <organismsDiffer>false</organismsDiffer>
    <experiments>5</experiments>
</comment>
<comment type="interaction">
    <interactant intactId="EBI-2512147">
        <id>Q8IUH3</id>
    </interactant>
    <interactant intactId="EBI-1104564">
        <id>Q9Y316</id>
        <label>MEMO1</label>
    </interactant>
    <organismsDiffer>false</organismsDiffer>
    <experiments>3</experiments>
</comment>
<comment type="interaction">
    <interactant intactId="EBI-2512147">
        <id>Q8IUH3</id>
    </interactant>
    <interactant intactId="EBI-954272">
        <id>Q96PK6</id>
        <label>RBM14</label>
    </interactant>
    <organismsDiffer>false</organismsDiffer>
    <experiments>4</experiments>
</comment>
<comment type="interaction">
    <interactant intactId="EBI-2512147">
        <id>Q8IUH3</id>
    </interactant>
    <interactant intactId="EBI-359224">
        <id>Q13077</id>
        <label>TRAF1</label>
    </interactant>
    <organismsDiffer>false</organismsDiffer>
    <experiments>3</experiments>
</comment>
<comment type="interaction">
    <interactant intactId="EBI-2512147">
        <id>Q8IUH3</id>
    </interactant>
    <interactant intactId="EBI-2932492">
        <id>Q99757</id>
        <label>TXN2</label>
    </interactant>
    <organismsDiffer>false</organismsDiffer>
    <experiments>3</experiments>
</comment>
<comment type="interaction">
    <interactant intactId="EBI-2512147">
        <id>Q8IUH3</id>
    </interactant>
    <interactant intactId="EBI-7251981">
        <id>O75554</id>
        <label>WBP4</label>
    </interactant>
    <organismsDiffer>false</organismsDiffer>
    <experiments>2</experiments>
</comment>
<comment type="interaction">
    <interactant intactId="EBI-10964453">
        <id>Q8IUH3-3</id>
    </interactant>
    <interactant intactId="EBI-750671">
        <id>Q15699</id>
        <label>ALX1</label>
    </interactant>
    <organismsDiffer>false</organismsDiffer>
    <experiments>3</experiments>
</comment>
<comment type="interaction">
    <interactant intactId="EBI-10964453">
        <id>Q8IUH3-3</id>
    </interactant>
    <interactant intactId="EBI-1055254">
        <id>Q8WXH2</id>
        <label>JPH3</label>
    </interactant>
    <organismsDiffer>false</organismsDiffer>
    <experiments>3</experiments>
</comment>
<comment type="interaction">
    <interactant intactId="EBI-10964453">
        <id>Q8IUH3-3</id>
    </interactant>
    <interactant intactId="EBI-741158">
        <id>Q96HA8</id>
        <label>NTAQ1</label>
    </interactant>
    <organismsDiffer>false</organismsDiffer>
    <experiments>3</experiments>
</comment>
<comment type="interaction">
    <interactant intactId="EBI-10964453">
        <id>Q8IUH3-3</id>
    </interactant>
    <interactant intactId="EBI-10964453">
        <id>Q8IUH3-3</id>
        <label>RBM45</label>
    </interactant>
    <organismsDiffer>false</organismsDiffer>
    <experiments>3</experiments>
</comment>
<comment type="interaction">
    <interactant intactId="EBI-10964453">
        <id>Q8IUH3-3</id>
    </interactant>
    <interactant intactId="EBI-12076664">
        <id>O14787-2</id>
        <label>TNPO2</label>
    </interactant>
    <organismsDiffer>false</organismsDiffer>
    <experiments>3</experiments>
</comment>
<comment type="interaction">
    <interactant intactId="EBI-10964453">
        <id>Q8IUH3-3</id>
    </interactant>
    <interactant intactId="EBI-359224">
        <id>Q13077</id>
        <label>TRAF1</label>
    </interactant>
    <organismsDiffer>false</organismsDiffer>
    <experiments>3</experiments>
</comment>
<comment type="interaction">
    <interactant intactId="EBI-10964453">
        <id>Q8IUH3-3</id>
    </interactant>
    <interactant intactId="EBI-2932492">
        <id>Q99757</id>
        <label>TXN2</label>
    </interactant>
    <organismsDiffer>false</organismsDiffer>
    <experiments>3</experiments>
</comment>
<comment type="subcellular location">
    <subcellularLocation>
        <location evidence="5">Cytoplasm</location>
    </subcellularLocation>
    <subcellularLocation>
        <location evidence="5">Nucleus</location>
    </subcellularLocation>
    <text>Predominantly cytoplasmic. May shuttle between cytoplasm and nucleus.</text>
</comment>
<comment type="alternative products">
    <event type="alternative splicing"/>
    <isoform>
        <id>Q8IUH3-1</id>
        <name evidence="5">1</name>
        <sequence type="displayed"/>
    </isoform>
    <isoform>
        <id>Q8IUH3-2</id>
        <name>2</name>
        <sequence type="described" ref="VSP_021005 VSP_051661 VSP_051662"/>
    </isoform>
    <isoform>
        <id>Q8IUH3-3</id>
        <name>3</name>
        <sequence type="described" ref="VSP_021005"/>
    </isoform>
</comment>
<comment type="miscellaneous">
    <molecule>Isoform 2</molecule>
    <text evidence="8">May be due to an intron retention.</text>
</comment>
<protein>
    <recommendedName>
        <fullName>RNA-binding protein 45</fullName>
    </recommendedName>
    <alternativeName>
        <fullName>Developmentally-regulated RNA-binding protein 1</fullName>
        <shortName>RB-1</shortName>
    </alternativeName>
    <alternativeName>
        <fullName>RNA-binding motif protein 45</fullName>
    </alternativeName>
</protein>
<evidence type="ECO:0000250" key="1">
    <source>
        <dbReference type="UniProtKB" id="Q8BHN5"/>
    </source>
</evidence>
<evidence type="ECO:0000250" key="2">
    <source>
        <dbReference type="UniProtKB" id="Q8CFD1"/>
    </source>
</evidence>
<evidence type="ECO:0000255" key="3">
    <source>
        <dbReference type="PROSITE-ProRule" id="PRU00176"/>
    </source>
</evidence>
<evidence type="ECO:0000256" key="4">
    <source>
        <dbReference type="SAM" id="MobiDB-lite"/>
    </source>
</evidence>
<evidence type="ECO:0000269" key="5">
    <source>
    </source>
</evidence>
<evidence type="ECO:0000303" key="6">
    <source>
    </source>
</evidence>
<evidence type="ECO:0000303" key="7">
    <source ref="2"/>
</evidence>
<evidence type="ECO:0000305" key="8"/>
<evidence type="ECO:0000312" key="9">
    <source>
        <dbReference type="EMBL" id="AAH66549.1"/>
    </source>
</evidence>
<evidence type="ECO:0000312" key="10">
    <source>
        <dbReference type="EMBL" id="AAM88417.1"/>
    </source>
</evidence>
<evidence type="ECO:0000312" key="11">
    <source>
        <dbReference type="EMBL" id="BAC16207.1"/>
    </source>
</evidence>
<evidence type="ECO:0007744" key="12">
    <source>
    </source>
</evidence>
<evidence type="ECO:0007744" key="13">
    <source>
    </source>
</evidence>
<evidence type="ECO:0007829" key="14">
    <source>
        <dbReference type="PDB" id="7CSX"/>
    </source>
</evidence>
<evidence type="ECO:0007829" key="15">
    <source>
        <dbReference type="PDB" id="7CSZ"/>
    </source>
</evidence>
<evidence type="ECO:0007829" key="16">
    <source>
        <dbReference type="PDB" id="8WQ3"/>
    </source>
</evidence>
<evidence type="ECO:0007829" key="17">
    <source>
        <dbReference type="PDB" id="8WQ5"/>
    </source>
</evidence>
<keyword id="KW-0002">3D-structure</keyword>
<keyword id="KW-0025">Alternative splicing</keyword>
<keyword id="KW-0963">Cytoplasm</keyword>
<keyword id="KW-0217">Developmental protein</keyword>
<keyword id="KW-0221">Differentiation</keyword>
<keyword id="KW-1017">Isopeptide bond</keyword>
<keyword id="KW-0524">Neurogenesis</keyword>
<keyword id="KW-0539">Nucleus</keyword>
<keyword id="KW-0597">Phosphoprotein</keyword>
<keyword id="KW-1267">Proteomics identification</keyword>
<keyword id="KW-1185">Reference proteome</keyword>
<keyword id="KW-0677">Repeat</keyword>
<keyword id="KW-0694">RNA-binding</keyword>
<keyword id="KW-0832">Ubl conjugation</keyword>
<accession>Q8IUH3</accession>
<accession>Q6NYL0</accession>
<accession>Q8NFC9</accession>
<name>RBM45_HUMAN</name>
<reference evidence="8 11" key="1">
    <citation type="journal article" date="2002" name="Biochem. Biophys. Res. Commun.">
        <title>cDNA cloning and characterization of Drb1, a new member of RRM-type neural RNA-binding protein.</title>
        <authorList>
            <person name="Tamada H."/>
            <person name="Sakashita E."/>
            <person name="Shimazaki K."/>
            <person name="Ueno E."/>
            <person name="Hamamoto T."/>
            <person name="Kagawa Y."/>
            <person name="Endo H."/>
        </authorList>
    </citation>
    <scope>NUCLEOTIDE SEQUENCE [MRNA] (ISOFORM 1)</scope>
    <scope>FUNCTION</scope>
    <scope>SUBCELLULAR LOCATION</scope>
    <source>
        <tissue evidence="11">Brain</tissue>
    </source>
</reference>
<reference evidence="8 10" key="2">
    <citation type="submission" date="2002-07" db="EMBL/GenBank/DDBJ databases">
        <authorList>
            <person name="Chen X.G."/>
            <person name="Li Y."/>
        </authorList>
    </citation>
    <scope>NUCLEOTIDE SEQUENCE [MRNA] (ISOFORM 2)</scope>
    <source>
        <tissue evidence="10">Heart</tissue>
    </source>
</reference>
<reference evidence="8 9" key="3">
    <citation type="journal article" date="2004" name="Genome Res.">
        <title>The status, quality, and expansion of the NIH full-length cDNA project: the Mammalian Gene Collection (MGC).</title>
        <authorList>
            <consortium name="The MGC Project Team"/>
        </authorList>
    </citation>
    <scope>NUCLEOTIDE SEQUENCE [LARGE SCALE MRNA] (ISOFORM 3)</scope>
    <source>
        <tissue evidence="9">Pancreas</tissue>
    </source>
</reference>
<reference key="4">
    <citation type="journal article" date="2013" name="J. Proteome Res.">
        <title>Toward a comprehensive characterization of a human cancer cell phosphoproteome.</title>
        <authorList>
            <person name="Zhou H."/>
            <person name="Di Palma S."/>
            <person name="Preisinger C."/>
            <person name="Peng M."/>
            <person name="Polat A.N."/>
            <person name="Heck A.J."/>
            <person name="Mohammed S."/>
        </authorList>
    </citation>
    <scope>PHOSPHORYLATION [LARGE SCALE ANALYSIS] AT SER-464</scope>
    <scope>IDENTIFICATION BY MASS SPECTROMETRY [LARGE SCALE ANALYSIS]</scope>
    <source>
        <tissue>Erythroleukemia</tissue>
    </source>
</reference>
<reference key="5">
    <citation type="journal article" date="2017" name="Nat. Struct. Mol. Biol.">
        <title>Site-specific mapping of the human SUMO proteome reveals co-modification with phosphorylation.</title>
        <authorList>
            <person name="Hendriks I.A."/>
            <person name="Lyon D."/>
            <person name="Young C."/>
            <person name="Jensen L.J."/>
            <person name="Vertegaal A.C."/>
            <person name="Nielsen M.L."/>
        </authorList>
    </citation>
    <scope>SUMOYLATION [LARGE SCALE ANALYSIS] AT LYS-34</scope>
    <scope>IDENTIFICATION BY MASS SPECTROMETRY [LARGE SCALE ANALYSIS]</scope>
</reference>